<accession>O28538</accession>
<proteinExistence type="inferred from homology"/>
<keyword id="KW-0414">Isoprene biosynthesis</keyword>
<keyword id="KW-0521">NADP</keyword>
<keyword id="KW-0560">Oxidoreductase</keyword>
<keyword id="KW-1185">Reference proteome</keyword>
<organism>
    <name type="scientific">Archaeoglobus fulgidus (strain ATCC 49558 / DSM 4304 / JCM 9628 / NBRC 100126 / VC-16)</name>
    <dbReference type="NCBI Taxonomy" id="224325"/>
    <lineage>
        <taxon>Archaea</taxon>
        <taxon>Methanobacteriati</taxon>
        <taxon>Methanobacteriota</taxon>
        <taxon>Archaeoglobi</taxon>
        <taxon>Archaeoglobales</taxon>
        <taxon>Archaeoglobaceae</taxon>
        <taxon>Archaeoglobus</taxon>
    </lineage>
</organism>
<comment type="function">
    <text evidence="1">Converts HMG-CoA to mevalonate.</text>
</comment>
<comment type="catalytic activity">
    <reaction evidence="2">
        <text>(R)-mevalonate + 2 NADP(+) + CoA = (3S)-3-hydroxy-3-methylglutaryl-CoA + 2 NADPH + 2 H(+)</text>
        <dbReference type="Rhea" id="RHEA:15989"/>
        <dbReference type="ChEBI" id="CHEBI:15378"/>
        <dbReference type="ChEBI" id="CHEBI:36464"/>
        <dbReference type="ChEBI" id="CHEBI:43074"/>
        <dbReference type="ChEBI" id="CHEBI:57287"/>
        <dbReference type="ChEBI" id="CHEBI:57783"/>
        <dbReference type="ChEBI" id="CHEBI:58349"/>
        <dbReference type="EC" id="1.1.1.34"/>
    </reaction>
</comment>
<comment type="pathway">
    <text>Metabolic intermediate biosynthesis; (R)-mevalonate biosynthesis; (R)-mevalonate from acetyl-CoA: step 3/3.</text>
</comment>
<comment type="similarity">
    <text evidence="3">Belongs to the HMG-CoA reductase family.</text>
</comment>
<name>HMDH_ARCFU</name>
<protein>
    <recommendedName>
        <fullName>3-hydroxy-3-methylglutaryl-coenzyme A reductase</fullName>
        <shortName>HMG-CoA reductase</shortName>
        <ecNumber>1.1.1.34</ecNumber>
    </recommendedName>
</protein>
<reference key="1">
    <citation type="journal article" date="1997" name="Nature">
        <title>The complete genome sequence of the hyperthermophilic, sulphate-reducing archaeon Archaeoglobus fulgidus.</title>
        <authorList>
            <person name="Klenk H.-P."/>
            <person name="Clayton R.A."/>
            <person name="Tomb J.-F."/>
            <person name="White O."/>
            <person name="Nelson K.E."/>
            <person name="Ketchum K.A."/>
            <person name="Dodson R.J."/>
            <person name="Gwinn M.L."/>
            <person name="Hickey E.K."/>
            <person name="Peterson J.D."/>
            <person name="Richardson D.L."/>
            <person name="Kerlavage A.R."/>
            <person name="Graham D.E."/>
            <person name="Kyrpides N.C."/>
            <person name="Fleischmann R.D."/>
            <person name="Quackenbush J."/>
            <person name="Lee N.H."/>
            <person name="Sutton G.G."/>
            <person name="Gill S.R."/>
            <person name="Kirkness E.F."/>
            <person name="Dougherty B.A."/>
            <person name="McKenney K."/>
            <person name="Adams M.D."/>
            <person name="Loftus B.J."/>
            <person name="Peterson S.N."/>
            <person name="Reich C.I."/>
            <person name="McNeil L.K."/>
            <person name="Badger J.H."/>
            <person name="Glodek A."/>
            <person name="Zhou L."/>
            <person name="Overbeek R."/>
            <person name="Gocayne J.D."/>
            <person name="Weidman J.F."/>
            <person name="McDonald L.A."/>
            <person name="Utterback T.R."/>
            <person name="Cotton M.D."/>
            <person name="Spriggs T."/>
            <person name="Artiach P."/>
            <person name="Kaine B.P."/>
            <person name="Sykes S.M."/>
            <person name="Sadow P.W."/>
            <person name="D'Andrea K.P."/>
            <person name="Bowman C."/>
            <person name="Fujii C."/>
            <person name="Garland S.A."/>
            <person name="Mason T.M."/>
            <person name="Olsen G.J."/>
            <person name="Fraser C.M."/>
            <person name="Smith H.O."/>
            <person name="Woese C.R."/>
            <person name="Venter J.C."/>
        </authorList>
    </citation>
    <scope>NUCLEOTIDE SEQUENCE [LARGE SCALE GENOMIC DNA]</scope>
    <source>
        <strain>ATCC 49558 / DSM 4304 / JCM 9628 / NBRC 100126 / VC-16</strain>
    </source>
</reference>
<feature type="chain" id="PRO_0000114459" description="3-hydroxy-3-methylglutaryl-coenzyme A reductase">
    <location>
        <begin position="1"/>
        <end position="436"/>
    </location>
</feature>
<feature type="active site" description="Charge relay system" evidence="1">
    <location>
        <position position="99"/>
    </location>
</feature>
<feature type="active site" description="Charge relay system" evidence="1">
    <location>
        <position position="277"/>
    </location>
</feature>
<feature type="active site" description="Charge relay system" evidence="1">
    <location>
        <position position="293"/>
    </location>
</feature>
<feature type="active site" description="Proton donor" evidence="2">
    <location>
        <position position="390"/>
    </location>
</feature>
<dbReference type="EC" id="1.1.1.34"/>
<dbReference type="EMBL" id="AE000782">
    <property type="protein sequence ID" value="AAB89513.1"/>
    <property type="molecule type" value="Genomic_DNA"/>
</dbReference>
<dbReference type="PIR" id="G69466">
    <property type="entry name" value="G69466"/>
</dbReference>
<dbReference type="SMR" id="O28538"/>
<dbReference type="STRING" id="224325.AF_1736"/>
<dbReference type="PaxDb" id="224325-AF_1736"/>
<dbReference type="EnsemblBacteria" id="AAB89513">
    <property type="protein sequence ID" value="AAB89513"/>
    <property type="gene ID" value="AF_1736"/>
</dbReference>
<dbReference type="KEGG" id="afu:AF_1736"/>
<dbReference type="eggNOG" id="arCOG04260">
    <property type="taxonomic scope" value="Archaea"/>
</dbReference>
<dbReference type="HOGENOM" id="CLU_033422_0_0_2"/>
<dbReference type="OrthoDB" id="10981at2157"/>
<dbReference type="PhylomeDB" id="O28538"/>
<dbReference type="BRENDA" id="1.1.1.B38">
    <property type="organism ID" value="414"/>
</dbReference>
<dbReference type="UniPathway" id="UPA00058">
    <property type="reaction ID" value="UER00103"/>
</dbReference>
<dbReference type="Proteomes" id="UP000002199">
    <property type="component" value="Chromosome"/>
</dbReference>
<dbReference type="GO" id="GO:0004420">
    <property type="term" value="F:hydroxymethylglutaryl-CoA reductase (NADPH) activity"/>
    <property type="evidence" value="ECO:0007669"/>
    <property type="project" value="UniProtKB-EC"/>
</dbReference>
<dbReference type="GO" id="GO:0015936">
    <property type="term" value="P:coenzyme A metabolic process"/>
    <property type="evidence" value="ECO:0007669"/>
    <property type="project" value="InterPro"/>
</dbReference>
<dbReference type="GO" id="GO:0008299">
    <property type="term" value="P:isoprenoid biosynthetic process"/>
    <property type="evidence" value="ECO:0007669"/>
    <property type="project" value="UniProtKB-KW"/>
</dbReference>
<dbReference type="CDD" id="cd00644">
    <property type="entry name" value="HMG-CoA_reductase_classII"/>
    <property type="match status" value="1"/>
</dbReference>
<dbReference type="Gene3D" id="1.10.8.660">
    <property type="match status" value="1"/>
</dbReference>
<dbReference type="Gene3D" id="3.90.770.10">
    <property type="entry name" value="3-hydroxy-3-methylglutaryl-coenzyme A Reductase, Chain A, domain 2"/>
    <property type="match status" value="2"/>
</dbReference>
<dbReference type="InterPro" id="IPR002202">
    <property type="entry name" value="HMG_CoA_Rdtase"/>
</dbReference>
<dbReference type="InterPro" id="IPR004553">
    <property type="entry name" value="HMG_CoA_Rdtase_bac-typ"/>
</dbReference>
<dbReference type="InterPro" id="IPR023074">
    <property type="entry name" value="HMG_CoA_Rdtase_cat_sf"/>
</dbReference>
<dbReference type="InterPro" id="IPR023076">
    <property type="entry name" value="HMG_CoA_Rdtase_CS"/>
</dbReference>
<dbReference type="InterPro" id="IPR009023">
    <property type="entry name" value="HMG_CoA_Rdtase_NAD(P)-bd_sf"/>
</dbReference>
<dbReference type="InterPro" id="IPR009029">
    <property type="entry name" value="HMG_CoA_Rdtase_sub-bd_dom_sf"/>
</dbReference>
<dbReference type="NCBIfam" id="TIGR00532">
    <property type="entry name" value="HMG_CoA_R_NAD"/>
    <property type="match status" value="1"/>
</dbReference>
<dbReference type="PANTHER" id="PTHR10572">
    <property type="entry name" value="3-HYDROXY-3-METHYLGLUTARYL-COENZYME A REDUCTASE"/>
    <property type="match status" value="1"/>
</dbReference>
<dbReference type="PANTHER" id="PTHR10572:SF24">
    <property type="entry name" value="3-HYDROXY-3-METHYLGLUTARYL-COENZYME A REDUCTASE"/>
    <property type="match status" value="1"/>
</dbReference>
<dbReference type="Pfam" id="PF00368">
    <property type="entry name" value="HMG-CoA_red"/>
    <property type="match status" value="1"/>
</dbReference>
<dbReference type="PRINTS" id="PR00071">
    <property type="entry name" value="HMGCOARDTASE"/>
</dbReference>
<dbReference type="SUPFAM" id="SSF55035">
    <property type="entry name" value="NAD-binding domain of HMG-CoA reductase"/>
    <property type="match status" value="1"/>
</dbReference>
<dbReference type="SUPFAM" id="SSF56542">
    <property type="entry name" value="Substrate-binding domain of HMG-CoA reductase"/>
    <property type="match status" value="1"/>
</dbReference>
<dbReference type="PROSITE" id="PS00066">
    <property type="entry name" value="HMG_COA_REDUCTASE_1"/>
    <property type="match status" value="1"/>
</dbReference>
<dbReference type="PROSITE" id="PS00318">
    <property type="entry name" value="HMG_COA_REDUCTASE_2"/>
    <property type="match status" value="1"/>
</dbReference>
<dbReference type="PROSITE" id="PS01192">
    <property type="entry name" value="HMG_COA_REDUCTASE_3"/>
    <property type="match status" value="1"/>
</dbReference>
<dbReference type="PROSITE" id="PS50065">
    <property type="entry name" value="HMG_COA_REDUCTASE_4"/>
    <property type="match status" value="1"/>
</dbReference>
<gene>
    <name type="primary">hmgA</name>
    <name type="ordered locus">AF_1736</name>
</gene>
<evidence type="ECO:0000250" key="1"/>
<evidence type="ECO:0000255" key="2">
    <source>
        <dbReference type="PROSITE-ProRule" id="PRU10003"/>
    </source>
</evidence>
<evidence type="ECO:0000305" key="3"/>
<sequence>MQVLRLDRRHYKSGKIRRAMSSRIPGFYKLSVEERLKKVAEFAGLSDEEVKAVLSQGLPLDVADRMIENVIGTFELPLGIATNFLIDGKDYLIPMAIEEPSVVAAASNAARMARESGGFTTDYTGSLMIGQIQVTKLLNPNAAKFEVLRQKDEIIERANECDPMLVNLGGGCKDIEARVIDTIMGKMLIVHLIVDVKDAMGANAVNTMCEKVAPFIERITGGKVYLRIISNLAAYRLARAKAVFDKDVIGGEEVVEGIMLAYAFAAADPFRCATHNKGIMNGISALMIATGNDFRAIEAGAHSYAAIGGYKPLTTYEVDRKGNLVGTIEIPMAVGVIGGATKVNPLAKISLKILGVNTAEELARVAAALGLAQNFAALRALATEGIQRGHMELHARNLAIMAGATGDEVDRVVEIMVRDGKIRLDYAKEVLERLRS</sequence>